<protein>
    <recommendedName>
        <fullName evidence="1">Chaperone protein DnaJ</fullName>
    </recommendedName>
</protein>
<sequence length="376" mass="40751">MSKRDYYEVLGVGRDASEREIKKAYKRLAMKFHPDRNPGDKAAEASFKEAKEAYEILTDTDKKAAYDQFGHAGVDPNRGGGYGGGQGDFGDIFGDVFGDIFGGGRRGGQRQAARGSDLRYNLELSLEEAVKGLTKELRIPTLATCDLCDGSGAKKGTSASTCTTCHGQGQVQMRQGFFTVQQPCPTCHGRGKIIKDPCTKCHGDGRVEKSKTLSVKIPAGVDTGDRIRLAGEGEAGEFGAPPGDLYVQVSVREHAIFVRDGNNLYCEVPISFSKAALGGEIEVPTLDGKVSLKIPAETQTGRMFRLRGKGVKSVRSHAVGDLLCKVVMETPVNLNDRQKELLREFEATLTGESKKHSPKAEGFFDGVKKFFQDLNS</sequence>
<accession>A4Y9Q2</accession>
<gene>
    <name evidence="1" type="primary">dnaJ</name>
    <name type="ordered locus">Sputcn32_2970</name>
</gene>
<feature type="chain" id="PRO_1000085295" description="Chaperone protein DnaJ">
    <location>
        <begin position="1"/>
        <end position="376"/>
    </location>
</feature>
<feature type="domain" description="J" evidence="1">
    <location>
        <begin position="5"/>
        <end position="70"/>
    </location>
</feature>
<feature type="repeat" description="CXXCXGXG motif">
    <location>
        <begin position="145"/>
        <end position="152"/>
    </location>
</feature>
<feature type="repeat" description="CXXCXGXG motif">
    <location>
        <begin position="162"/>
        <end position="169"/>
    </location>
</feature>
<feature type="repeat" description="CXXCXGXG motif">
    <location>
        <begin position="184"/>
        <end position="191"/>
    </location>
</feature>
<feature type="repeat" description="CXXCXGXG motif">
    <location>
        <begin position="198"/>
        <end position="205"/>
    </location>
</feature>
<feature type="zinc finger region" description="CR-type" evidence="1">
    <location>
        <begin position="132"/>
        <end position="210"/>
    </location>
</feature>
<feature type="binding site" evidence="1">
    <location>
        <position position="145"/>
    </location>
    <ligand>
        <name>Zn(2+)</name>
        <dbReference type="ChEBI" id="CHEBI:29105"/>
        <label>1</label>
    </ligand>
</feature>
<feature type="binding site" evidence="1">
    <location>
        <position position="148"/>
    </location>
    <ligand>
        <name>Zn(2+)</name>
        <dbReference type="ChEBI" id="CHEBI:29105"/>
        <label>1</label>
    </ligand>
</feature>
<feature type="binding site" evidence="1">
    <location>
        <position position="162"/>
    </location>
    <ligand>
        <name>Zn(2+)</name>
        <dbReference type="ChEBI" id="CHEBI:29105"/>
        <label>2</label>
    </ligand>
</feature>
<feature type="binding site" evidence="1">
    <location>
        <position position="165"/>
    </location>
    <ligand>
        <name>Zn(2+)</name>
        <dbReference type="ChEBI" id="CHEBI:29105"/>
        <label>2</label>
    </ligand>
</feature>
<feature type="binding site" evidence="1">
    <location>
        <position position="184"/>
    </location>
    <ligand>
        <name>Zn(2+)</name>
        <dbReference type="ChEBI" id="CHEBI:29105"/>
        <label>2</label>
    </ligand>
</feature>
<feature type="binding site" evidence="1">
    <location>
        <position position="187"/>
    </location>
    <ligand>
        <name>Zn(2+)</name>
        <dbReference type="ChEBI" id="CHEBI:29105"/>
        <label>2</label>
    </ligand>
</feature>
<feature type="binding site" evidence="1">
    <location>
        <position position="198"/>
    </location>
    <ligand>
        <name>Zn(2+)</name>
        <dbReference type="ChEBI" id="CHEBI:29105"/>
        <label>1</label>
    </ligand>
</feature>
<feature type="binding site" evidence="1">
    <location>
        <position position="201"/>
    </location>
    <ligand>
        <name>Zn(2+)</name>
        <dbReference type="ChEBI" id="CHEBI:29105"/>
        <label>1</label>
    </ligand>
</feature>
<keyword id="KW-0143">Chaperone</keyword>
<keyword id="KW-0963">Cytoplasm</keyword>
<keyword id="KW-0235">DNA replication</keyword>
<keyword id="KW-0479">Metal-binding</keyword>
<keyword id="KW-0677">Repeat</keyword>
<keyword id="KW-0346">Stress response</keyword>
<keyword id="KW-0862">Zinc</keyword>
<keyword id="KW-0863">Zinc-finger</keyword>
<proteinExistence type="inferred from homology"/>
<reference key="1">
    <citation type="submission" date="2007-04" db="EMBL/GenBank/DDBJ databases">
        <title>Complete sequence of Shewanella putrefaciens CN-32.</title>
        <authorList>
            <consortium name="US DOE Joint Genome Institute"/>
            <person name="Copeland A."/>
            <person name="Lucas S."/>
            <person name="Lapidus A."/>
            <person name="Barry K."/>
            <person name="Detter J.C."/>
            <person name="Glavina del Rio T."/>
            <person name="Hammon N."/>
            <person name="Israni S."/>
            <person name="Dalin E."/>
            <person name="Tice H."/>
            <person name="Pitluck S."/>
            <person name="Chain P."/>
            <person name="Malfatti S."/>
            <person name="Shin M."/>
            <person name="Vergez L."/>
            <person name="Schmutz J."/>
            <person name="Larimer F."/>
            <person name="Land M."/>
            <person name="Hauser L."/>
            <person name="Kyrpides N."/>
            <person name="Mikhailova N."/>
            <person name="Romine M.F."/>
            <person name="Fredrickson J."/>
            <person name="Tiedje J."/>
            <person name="Richardson P."/>
        </authorList>
    </citation>
    <scope>NUCLEOTIDE SEQUENCE [LARGE SCALE GENOMIC DNA]</scope>
    <source>
        <strain>CN-32 / ATCC BAA-453</strain>
    </source>
</reference>
<dbReference type="EMBL" id="CP000681">
    <property type="protein sequence ID" value="ABP76685.1"/>
    <property type="molecule type" value="Genomic_DNA"/>
</dbReference>
<dbReference type="SMR" id="A4Y9Q2"/>
<dbReference type="STRING" id="319224.Sputcn32_2970"/>
<dbReference type="KEGG" id="spc:Sputcn32_2970"/>
<dbReference type="eggNOG" id="COG0484">
    <property type="taxonomic scope" value="Bacteria"/>
</dbReference>
<dbReference type="HOGENOM" id="CLU_017633_0_7_6"/>
<dbReference type="GO" id="GO:0005737">
    <property type="term" value="C:cytoplasm"/>
    <property type="evidence" value="ECO:0007669"/>
    <property type="project" value="UniProtKB-SubCell"/>
</dbReference>
<dbReference type="GO" id="GO:0005524">
    <property type="term" value="F:ATP binding"/>
    <property type="evidence" value="ECO:0007669"/>
    <property type="project" value="InterPro"/>
</dbReference>
<dbReference type="GO" id="GO:0031072">
    <property type="term" value="F:heat shock protein binding"/>
    <property type="evidence" value="ECO:0007669"/>
    <property type="project" value="InterPro"/>
</dbReference>
<dbReference type="GO" id="GO:0051082">
    <property type="term" value="F:unfolded protein binding"/>
    <property type="evidence" value="ECO:0007669"/>
    <property type="project" value="UniProtKB-UniRule"/>
</dbReference>
<dbReference type="GO" id="GO:0008270">
    <property type="term" value="F:zinc ion binding"/>
    <property type="evidence" value="ECO:0007669"/>
    <property type="project" value="UniProtKB-UniRule"/>
</dbReference>
<dbReference type="GO" id="GO:0051085">
    <property type="term" value="P:chaperone cofactor-dependent protein refolding"/>
    <property type="evidence" value="ECO:0007669"/>
    <property type="project" value="TreeGrafter"/>
</dbReference>
<dbReference type="GO" id="GO:0006260">
    <property type="term" value="P:DNA replication"/>
    <property type="evidence" value="ECO:0007669"/>
    <property type="project" value="UniProtKB-KW"/>
</dbReference>
<dbReference type="GO" id="GO:0042026">
    <property type="term" value="P:protein refolding"/>
    <property type="evidence" value="ECO:0007669"/>
    <property type="project" value="TreeGrafter"/>
</dbReference>
<dbReference type="GO" id="GO:0009408">
    <property type="term" value="P:response to heat"/>
    <property type="evidence" value="ECO:0007669"/>
    <property type="project" value="InterPro"/>
</dbReference>
<dbReference type="CDD" id="cd06257">
    <property type="entry name" value="DnaJ"/>
    <property type="match status" value="1"/>
</dbReference>
<dbReference type="CDD" id="cd10747">
    <property type="entry name" value="DnaJ_C"/>
    <property type="match status" value="1"/>
</dbReference>
<dbReference type="CDD" id="cd10719">
    <property type="entry name" value="DnaJ_zf"/>
    <property type="match status" value="1"/>
</dbReference>
<dbReference type="FunFam" id="1.10.287.110:FF:000034">
    <property type="entry name" value="Chaperone protein DnaJ"/>
    <property type="match status" value="1"/>
</dbReference>
<dbReference type="FunFam" id="2.10.230.10:FF:000002">
    <property type="entry name" value="Molecular chaperone DnaJ"/>
    <property type="match status" value="1"/>
</dbReference>
<dbReference type="FunFam" id="2.60.260.20:FF:000004">
    <property type="entry name" value="Molecular chaperone DnaJ"/>
    <property type="match status" value="1"/>
</dbReference>
<dbReference type="Gene3D" id="1.10.287.110">
    <property type="entry name" value="DnaJ domain"/>
    <property type="match status" value="1"/>
</dbReference>
<dbReference type="Gene3D" id="2.10.230.10">
    <property type="entry name" value="Heat shock protein DnaJ, cysteine-rich domain"/>
    <property type="match status" value="1"/>
</dbReference>
<dbReference type="Gene3D" id="2.60.260.20">
    <property type="entry name" value="Urease metallochaperone UreE, N-terminal domain"/>
    <property type="match status" value="2"/>
</dbReference>
<dbReference type="HAMAP" id="MF_01152">
    <property type="entry name" value="DnaJ"/>
    <property type="match status" value="1"/>
</dbReference>
<dbReference type="InterPro" id="IPR012724">
    <property type="entry name" value="DnaJ"/>
</dbReference>
<dbReference type="InterPro" id="IPR002939">
    <property type="entry name" value="DnaJ_C"/>
</dbReference>
<dbReference type="InterPro" id="IPR001623">
    <property type="entry name" value="DnaJ_domain"/>
</dbReference>
<dbReference type="InterPro" id="IPR018253">
    <property type="entry name" value="DnaJ_domain_CS"/>
</dbReference>
<dbReference type="InterPro" id="IPR008971">
    <property type="entry name" value="HSP40/DnaJ_pept-bd"/>
</dbReference>
<dbReference type="InterPro" id="IPR001305">
    <property type="entry name" value="HSP_DnaJ_Cys-rich_dom"/>
</dbReference>
<dbReference type="InterPro" id="IPR036410">
    <property type="entry name" value="HSP_DnaJ_Cys-rich_dom_sf"/>
</dbReference>
<dbReference type="InterPro" id="IPR036869">
    <property type="entry name" value="J_dom_sf"/>
</dbReference>
<dbReference type="NCBIfam" id="TIGR02349">
    <property type="entry name" value="DnaJ_bact"/>
    <property type="match status" value="1"/>
</dbReference>
<dbReference type="NCBIfam" id="NF008035">
    <property type="entry name" value="PRK10767.1"/>
    <property type="match status" value="1"/>
</dbReference>
<dbReference type="PANTHER" id="PTHR43096:SF48">
    <property type="entry name" value="CHAPERONE PROTEIN DNAJ"/>
    <property type="match status" value="1"/>
</dbReference>
<dbReference type="PANTHER" id="PTHR43096">
    <property type="entry name" value="DNAJ HOMOLOG 1, MITOCHONDRIAL-RELATED"/>
    <property type="match status" value="1"/>
</dbReference>
<dbReference type="Pfam" id="PF00226">
    <property type="entry name" value="DnaJ"/>
    <property type="match status" value="1"/>
</dbReference>
<dbReference type="Pfam" id="PF01556">
    <property type="entry name" value="DnaJ_C"/>
    <property type="match status" value="1"/>
</dbReference>
<dbReference type="Pfam" id="PF00684">
    <property type="entry name" value="DnaJ_CXXCXGXG"/>
    <property type="match status" value="1"/>
</dbReference>
<dbReference type="PRINTS" id="PR00625">
    <property type="entry name" value="JDOMAIN"/>
</dbReference>
<dbReference type="SMART" id="SM00271">
    <property type="entry name" value="DnaJ"/>
    <property type="match status" value="1"/>
</dbReference>
<dbReference type="SUPFAM" id="SSF46565">
    <property type="entry name" value="Chaperone J-domain"/>
    <property type="match status" value="1"/>
</dbReference>
<dbReference type="SUPFAM" id="SSF57938">
    <property type="entry name" value="DnaJ/Hsp40 cysteine-rich domain"/>
    <property type="match status" value="1"/>
</dbReference>
<dbReference type="SUPFAM" id="SSF49493">
    <property type="entry name" value="HSP40/DnaJ peptide-binding domain"/>
    <property type="match status" value="2"/>
</dbReference>
<dbReference type="PROSITE" id="PS00636">
    <property type="entry name" value="DNAJ_1"/>
    <property type="match status" value="1"/>
</dbReference>
<dbReference type="PROSITE" id="PS50076">
    <property type="entry name" value="DNAJ_2"/>
    <property type="match status" value="1"/>
</dbReference>
<dbReference type="PROSITE" id="PS51188">
    <property type="entry name" value="ZF_CR"/>
    <property type="match status" value="1"/>
</dbReference>
<organism>
    <name type="scientific">Shewanella putrefaciens (strain CN-32 / ATCC BAA-453)</name>
    <dbReference type="NCBI Taxonomy" id="319224"/>
    <lineage>
        <taxon>Bacteria</taxon>
        <taxon>Pseudomonadati</taxon>
        <taxon>Pseudomonadota</taxon>
        <taxon>Gammaproteobacteria</taxon>
        <taxon>Alteromonadales</taxon>
        <taxon>Shewanellaceae</taxon>
        <taxon>Shewanella</taxon>
    </lineage>
</organism>
<comment type="function">
    <text evidence="1">Participates actively in the response to hyperosmotic and heat shock by preventing the aggregation of stress-denatured proteins and by disaggregating proteins, also in an autonomous, DnaK-independent fashion. Unfolded proteins bind initially to DnaJ; upon interaction with the DnaJ-bound protein, DnaK hydrolyzes its bound ATP, resulting in the formation of a stable complex. GrpE releases ADP from DnaK; ATP binding to DnaK triggers the release of the substrate protein, thus completing the reaction cycle. Several rounds of ATP-dependent interactions between DnaJ, DnaK and GrpE are required for fully efficient folding. Also involved, together with DnaK and GrpE, in the DNA replication of plasmids through activation of initiation proteins.</text>
</comment>
<comment type="cofactor">
    <cofactor evidence="1">
        <name>Zn(2+)</name>
        <dbReference type="ChEBI" id="CHEBI:29105"/>
    </cofactor>
    <text evidence="1">Binds 2 Zn(2+) ions per monomer.</text>
</comment>
<comment type="subunit">
    <text evidence="1">Homodimer.</text>
</comment>
<comment type="subcellular location">
    <subcellularLocation>
        <location evidence="1">Cytoplasm</location>
    </subcellularLocation>
</comment>
<comment type="domain">
    <text evidence="1">The J domain is necessary and sufficient to stimulate DnaK ATPase activity. Zinc center 1 plays an important role in the autonomous, DnaK-independent chaperone activity of DnaJ. Zinc center 2 is essential for interaction with DnaK and for DnaJ activity.</text>
</comment>
<comment type="similarity">
    <text evidence="1">Belongs to the DnaJ family.</text>
</comment>
<name>DNAJ_SHEPC</name>
<evidence type="ECO:0000255" key="1">
    <source>
        <dbReference type="HAMAP-Rule" id="MF_01152"/>
    </source>
</evidence>